<feature type="chain" id="PRO_0000236565" description="Large ribosomal subunit protein bL9">
    <location>
        <begin position="1"/>
        <end position="151"/>
    </location>
</feature>
<sequence length="151" mass="16446">MAKRVKVALTESIASLGKEGDLVEVAPGYARNFLLPYGKAMNVTPAVLKQIERKKEKEKIAADKLKQEALDFQTALSTIGRFTIKKQVGEDGVLFGTVTNGDVAEAIEAATKKEIDRRNITVPDIHNLGSFTAKIKLHPDVNAEVNIEVTS</sequence>
<reference key="1">
    <citation type="journal article" date="2006" name="Science">
        <title>Genomic islands and the ecology and evolution of Prochlorococcus.</title>
        <authorList>
            <person name="Coleman M.L."/>
            <person name="Sullivan M.B."/>
            <person name="Martiny A.C."/>
            <person name="Steglich C."/>
            <person name="Barry K."/>
            <person name="Delong E.F."/>
            <person name="Chisholm S.W."/>
        </authorList>
    </citation>
    <scope>NUCLEOTIDE SEQUENCE [LARGE SCALE GENOMIC DNA]</scope>
    <source>
        <strain>MIT 9312</strain>
    </source>
</reference>
<organism>
    <name type="scientific">Prochlorococcus marinus (strain MIT 9312)</name>
    <dbReference type="NCBI Taxonomy" id="74546"/>
    <lineage>
        <taxon>Bacteria</taxon>
        <taxon>Bacillati</taxon>
        <taxon>Cyanobacteriota</taxon>
        <taxon>Cyanophyceae</taxon>
        <taxon>Synechococcales</taxon>
        <taxon>Prochlorococcaceae</taxon>
        <taxon>Prochlorococcus</taxon>
    </lineage>
</organism>
<name>RL9_PROM9</name>
<dbReference type="EMBL" id="CP000111">
    <property type="protein sequence ID" value="ABB50826.1"/>
    <property type="molecule type" value="Genomic_DNA"/>
</dbReference>
<dbReference type="RefSeq" id="WP_011377307.1">
    <property type="nucleotide sequence ID" value="NC_007577.1"/>
</dbReference>
<dbReference type="SMR" id="Q317W9"/>
<dbReference type="STRING" id="74546.PMT9312_1765"/>
<dbReference type="KEGG" id="pmi:PMT9312_1765"/>
<dbReference type="eggNOG" id="COG0359">
    <property type="taxonomic scope" value="Bacteria"/>
</dbReference>
<dbReference type="HOGENOM" id="CLU_078938_5_1_3"/>
<dbReference type="OrthoDB" id="9788336at2"/>
<dbReference type="Proteomes" id="UP000002715">
    <property type="component" value="Chromosome"/>
</dbReference>
<dbReference type="GO" id="GO:1990904">
    <property type="term" value="C:ribonucleoprotein complex"/>
    <property type="evidence" value="ECO:0007669"/>
    <property type="project" value="UniProtKB-KW"/>
</dbReference>
<dbReference type="GO" id="GO:0005840">
    <property type="term" value="C:ribosome"/>
    <property type="evidence" value="ECO:0007669"/>
    <property type="project" value="UniProtKB-KW"/>
</dbReference>
<dbReference type="GO" id="GO:0019843">
    <property type="term" value="F:rRNA binding"/>
    <property type="evidence" value="ECO:0007669"/>
    <property type="project" value="UniProtKB-UniRule"/>
</dbReference>
<dbReference type="GO" id="GO:0003735">
    <property type="term" value="F:structural constituent of ribosome"/>
    <property type="evidence" value="ECO:0007669"/>
    <property type="project" value="InterPro"/>
</dbReference>
<dbReference type="GO" id="GO:0006412">
    <property type="term" value="P:translation"/>
    <property type="evidence" value="ECO:0007669"/>
    <property type="project" value="UniProtKB-UniRule"/>
</dbReference>
<dbReference type="Gene3D" id="3.10.430.100">
    <property type="entry name" value="Ribosomal protein L9, C-terminal domain"/>
    <property type="match status" value="1"/>
</dbReference>
<dbReference type="Gene3D" id="3.40.5.10">
    <property type="entry name" value="Ribosomal protein L9, N-terminal domain"/>
    <property type="match status" value="1"/>
</dbReference>
<dbReference type="HAMAP" id="MF_00503">
    <property type="entry name" value="Ribosomal_bL9"/>
    <property type="match status" value="1"/>
</dbReference>
<dbReference type="InterPro" id="IPR000244">
    <property type="entry name" value="Ribosomal_bL9"/>
</dbReference>
<dbReference type="InterPro" id="IPR009027">
    <property type="entry name" value="Ribosomal_bL9/RNase_H1_N"/>
</dbReference>
<dbReference type="InterPro" id="IPR020594">
    <property type="entry name" value="Ribosomal_bL9_bac/chp"/>
</dbReference>
<dbReference type="InterPro" id="IPR020069">
    <property type="entry name" value="Ribosomal_bL9_C"/>
</dbReference>
<dbReference type="InterPro" id="IPR036791">
    <property type="entry name" value="Ribosomal_bL9_C_sf"/>
</dbReference>
<dbReference type="InterPro" id="IPR020070">
    <property type="entry name" value="Ribosomal_bL9_N"/>
</dbReference>
<dbReference type="InterPro" id="IPR036935">
    <property type="entry name" value="Ribosomal_bL9_N_sf"/>
</dbReference>
<dbReference type="NCBIfam" id="TIGR00158">
    <property type="entry name" value="L9"/>
    <property type="match status" value="1"/>
</dbReference>
<dbReference type="PANTHER" id="PTHR21368">
    <property type="entry name" value="50S RIBOSOMAL PROTEIN L9"/>
    <property type="match status" value="1"/>
</dbReference>
<dbReference type="Pfam" id="PF03948">
    <property type="entry name" value="Ribosomal_L9_C"/>
    <property type="match status" value="1"/>
</dbReference>
<dbReference type="Pfam" id="PF01281">
    <property type="entry name" value="Ribosomal_L9_N"/>
    <property type="match status" value="1"/>
</dbReference>
<dbReference type="SUPFAM" id="SSF55658">
    <property type="entry name" value="L9 N-domain-like"/>
    <property type="match status" value="1"/>
</dbReference>
<dbReference type="SUPFAM" id="SSF55653">
    <property type="entry name" value="Ribosomal protein L9 C-domain"/>
    <property type="match status" value="1"/>
</dbReference>
<dbReference type="PROSITE" id="PS00651">
    <property type="entry name" value="RIBOSOMAL_L9"/>
    <property type="match status" value="1"/>
</dbReference>
<keyword id="KW-0687">Ribonucleoprotein</keyword>
<keyword id="KW-0689">Ribosomal protein</keyword>
<keyword id="KW-0694">RNA-binding</keyword>
<keyword id="KW-0699">rRNA-binding</keyword>
<gene>
    <name evidence="1" type="primary">rplI2</name>
    <name evidence="1" type="synonym">rpl9</name>
    <name type="ordered locus">PMT9312_1765</name>
</gene>
<comment type="function">
    <text evidence="1">Binds to the 23S rRNA.</text>
</comment>
<comment type="similarity">
    <text evidence="1">Belongs to the bacterial ribosomal protein bL9 family.</text>
</comment>
<proteinExistence type="inferred from homology"/>
<evidence type="ECO:0000255" key="1">
    <source>
        <dbReference type="HAMAP-Rule" id="MF_00503"/>
    </source>
</evidence>
<evidence type="ECO:0000305" key="2"/>
<accession>Q317W9</accession>
<protein>
    <recommendedName>
        <fullName evidence="1">Large ribosomal subunit protein bL9</fullName>
    </recommendedName>
    <alternativeName>
        <fullName evidence="2">50S ribosomal protein L9</fullName>
    </alternativeName>
</protein>